<evidence type="ECO:0000250" key="1">
    <source>
        <dbReference type="UniProtKB" id="Q8TUC0"/>
    </source>
</evidence>
<evidence type="ECO:0000269" key="2">
    <source>
    </source>
</evidence>
<evidence type="ECO:0000303" key="3">
    <source>
    </source>
</evidence>
<evidence type="ECO:0000305" key="4"/>
<evidence type="ECO:0000305" key="5">
    <source>
    </source>
</evidence>
<evidence type="ECO:0000312" key="6">
    <source>
        <dbReference type="EMBL" id="AAZ69813.1"/>
    </source>
</evidence>
<evidence type="ECO:0007744" key="7">
    <source>
        <dbReference type="PDB" id="4FFL"/>
    </source>
</evidence>
<evidence type="ECO:0007744" key="8">
    <source>
        <dbReference type="PDB" id="4FFM"/>
    </source>
</evidence>
<evidence type="ECO:0007744" key="9">
    <source>
        <dbReference type="PDB" id="4FFN"/>
    </source>
</evidence>
<evidence type="ECO:0007744" key="10">
    <source>
        <dbReference type="PDB" id="4FFO"/>
    </source>
</evidence>
<evidence type="ECO:0007744" key="11">
    <source>
        <dbReference type="PDB" id="4FFP"/>
    </source>
</evidence>
<evidence type="ECO:0007744" key="12">
    <source>
        <dbReference type="PDB" id="4FFR"/>
    </source>
</evidence>
<evidence type="ECO:0007829" key="13">
    <source>
        <dbReference type="PDB" id="4FFL"/>
    </source>
</evidence>
<proteinExistence type="evidence at protein level"/>
<feature type="chain" id="PRO_0000454906" description="3-methyl-D-ornithine--L-lysine ligase">
    <location>
        <begin position="1"/>
        <end position="363"/>
    </location>
</feature>
<feature type="binding site" evidence="2 7 8 9 10 12">
    <location>
        <position position="10"/>
    </location>
    <ligand>
        <name>ATP</name>
        <dbReference type="ChEBI" id="CHEBI:30616"/>
    </ligand>
</feature>
<feature type="binding site" evidence="2 7">
    <location>
        <begin position="11"/>
        <end position="12"/>
    </location>
    <ligand>
        <name>L-lysine</name>
        <dbReference type="ChEBI" id="CHEBI:32551"/>
    </ligand>
</feature>
<feature type="binding site" evidence="2 7 8 9 10 12">
    <location>
        <position position="31"/>
    </location>
    <ligand>
        <name>ATP</name>
        <dbReference type="ChEBI" id="CHEBI:30616"/>
    </ligand>
</feature>
<feature type="binding site" evidence="2 7 8 9 10 12">
    <location>
        <begin position="49"/>
        <end position="50"/>
    </location>
    <ligand>
        <name>ATP</name>
        <dbReference type="ChEBI" id="CHEBI:30616"/>
    </ligand>
</feature>
<feature type="binding site" evidence="2 7 8 9 10 12">
    <location>
        <begin position="72"/>
        <end position="73"/>
    </location>
    <ligand>
        <name>ATP</name>
        <dbReference type="ChEBI" id="CHEBI:30616"/>
    </ligand>
</feature>
<feature type="binding site" evidence="2 7">
    <location>
        <position position="72"/>
    </location>
    <ligand>
        <name>L-lysine</name>
        <dbReference type="ChEBI" id="CHEBI:32551"/>
    </ligand>
</feature>
<feature type="binding site" evidence="2 7 8 10 11">
    <location>
        <position position="104"/>
    </location>
    <ligand>
        <name>ADP</name>
        <dbReference type="ChEBI" id="CHEBI:456216"/>
    </ligand>
</feature>
<feature type="binding site" evidence="2 7 8 10 11">
    <location>
        <position position="131"/>
    </location>
    <ligand>
        <name>ADP</name>
        <dbReference type="ChEBI" id="CHEBI:456216"/>
    </ligand>
</feature>
<feature type="binding site" evidence="2 7 10 11">
    <location>
        <position position="138"/>
    </location>
    <ligand>
        <name>ADP</name>
        <dbReference type="ChEBI" id="CHEBI:456216"/>
    </ligand>
</feature>
<feature type="binding site" evidence="2 7 8 10 11">
    <location>
        <begin position="160"/>
        <end position="163"/>
    </location>
    <ligand>
        <name>ADP</name>
        <dbReference type="ChEBI" id="CHEBI:456216"/>
    </ligand>
</feature>
<feature type="binding site" evidence="2 9">
    <location>
        <begin position="169"/>
        <end position="171"/>
    </location>
    <ligand>
        <name>D-ornithine</name>
        <dbReference type="ChEBI" id="CHEBI:57668"/>
    </ligand>
</feature>
<feature type="binding site" evidence="2 9">
    <location>
        <position position="225"/>
    </location>
    <ligand>
        <name>D-ornithine</name>
        <dbReference type="ChEBI" id="CHEBI:57668"/>
    </ligand>
</feature>
<feature type="binding site" evidence="2 7 8 9 10 11 12">
    <location>
        <position position="227"/>
    </location>
    <ligand>
        <name>Mg(2+)</name>
        <dbReference type="ChEBI" id="CHEBI:18420"/>
        <label>1</label>
    </ligand>
</feature>
<feature type="binding site" evidence="2 7 8 10 11">
    <location>
        <position position="239"/>
    </location>
    <ligand>
        <name>ADP</name>
        <dbReference type="ChEBI" id="CHEBI:456216"/>
    </ligand>
</feature>
<feature type="binding site" evidence="2 7 8 9 10 11 12">
    <location>
        <position position="239"/>
    </location>
    <ligand>
        <name>Mg(2+)</name>
        <dbReference type="ChEBI" id="CHEBI:18420"/>
        <label>1</label>
    </ligand>
</feature>
<feature type="binding site" evidence="2 7 8 9 10 11 12">
    <location>
        <position position="239"/>
    </location>
    <ligand>
        <name>Mg(2+)</name>
        <dbReference type="ChEBI" id="CHEBI:18420"/>
        <label>2</label>
    </ligand>
</feature>
<feature type="binding site" evidence="2 7 8 9 10 11 12">
    <location>
        <position position="241"/>
    </location>
    <ligand>
        <name>Mg(2+)</name>
        <dbReference type="ChEBI" id="CHEBI:18420"/>
        <label>2</label>
    </ligand>
</feature>
<feature type="binding site" evidence="2 9">
    <location>
        <begin position="243"/>
        <end position="248"/>
    </location>
    <ligand>
        <name>D-ornithine</name>
        <dbReference type="ChEBI" id="CHEBI:57668"/>
    </ligand>
</feature>
<feature type="binding site" evidence="2 7">
    <location>
        <position position="246"/>
    </location>
    <ligand>
        <name>L-lysine</name>
        <dbReference type="ChEBI" id="CHEBI:32551"/>
    </ligand>
</feature>
<feature type="binding site" evidence="2 9">
    <location>
        <position position="302"/>
    </location>
    <ligand>
        <name>D-ornithine</name>
        <dbReference type="ChEBI" id="CHEBI:57668"/>
    </ligand>
</feature>
<feature type="binding site" evidence="2 7">
    <location>
        <position position="302"/>
    </location>
    <ligand>
        <name>L-lysine</name>
        <dbReference type="ChEBI" id="CHEBI:32551"/>
    </ligand>
</feature>
<feature type="strand" evidence="13">
    <location>
        <begin position="3"/>
        <end position="7"/>
    </location>
</feature>
<feature type="helix" evidence="13">
    <location>
        <begin position="11"/>
        <end position="22"/>
    </location>
</feature>
<feature type="strand" evidence="13">
    <location>
        <begin position="26"/>
        <end position="32"/>
    </location>
</feature>
<feature type="turn" evidence="13">
    <location>
        <begin position="37"/>
        <end position="41"/>
    </location>
</feature>
<feature type="strand" evidence="13">
    <location>
        <begin position="42"/>
        <end position="47"/>
    </location>
</feature>
<feature type="turn" evidence="13">
    <location>
        <begin position="50"/>
        <end position="52"/>
    </location>
</feature>
<feature type="helix" evidence="13">
    <location>
        <begin position="54"/>
        <end position="61"/>
    </location>
</feature>
<feature type="strand" evidence="13">
    <location>
        <begin position="63"/>
        <end position="69"/>
    </location>
</feature>
<feature type="helix" evidence="13">
    <location>
        <begin position="74"/>
        <end position="83"/>
    </location>
</feature>
<feature type="helix" evidence="13">
    <location>
        <begin position="84"/>
        <end position="86"/>
    </location>
</feature>
<feature type="helix" evidence="13">
    <location>
        <begin position="95"/>
        <end position="101"/>
    </location>
</feature>
<feature type="helix" evidence="13">
    <location>
        <begin position="104"/>
        <end position="113"/>
    </location>
</feature>
<feature type="strand" evidence="13">
    <location>
        <begin position="124"/>
        <end position="126"/>
    </location>
</feature>
<feature type="strand" evidence="13">
    <location>
        <begin position="128"/>
        <end position="131"/>
    </location>
</feature>
<feature type="turn" evidence="13">
    <location>
        <begin position="137"/>
        <end position="140"/>
    </location>
</feature>
<feature type="strand" evidence="13">
    <location>
        <begin position="142"/>
        <end position="144"/>
    </location>
</feature>
<feature type="strand" evidence="13">
    <location>
        <begin position="158"/>
        <end position="161"/>
    </location>
</feature>
<feature type="strand" evidence="13">
    <location>
        <begin position="165"/>
        <end position="177"/>
    </location>
</feature>
<feature type="strand" evidence="13">
    <location>
        <begin position="179"/>
        <end position="181"/>
    </location>
</feature>
<feature type="strand" evidence="13">
    <location>
        <begin position="185"/>
        <end position="189"/>
    </location>
</feature>
<feature type="strand" evidence="13">
    <location>
        <begin position="195"/>
        <end position="200"/>
    </location>
</feature>
<feature type="helix" evidence="13">
    <location>
        <begin position="205"/>
        <end position="216"/>
    </location>
</feature>
<feature type="turn" evidence="13">
    <location>
        <begin position="217"/>
        <end position="219"/>
    </location>
</feature>
<feature type="strand" evidence="13">
    <location>
        <begin position="221"/>
        <end position="231"/>
    </location>
</feature>
<feature type="strand" evidence="13">
    <location>
        <begin position="234"/>
        <end position="241"/>
    </location>
</feature>
<feature type="helix" evidence="13">
    <location>
        <begin position="248"/>
        <end position="256"/>
    </location>
</feature>
<feature type="helix" evidence="13">
    <location>
        <begin position="260"/>
        <end position="267"/>
    </location>
</feature>
<feature type="turn" evidence="13">
    <location>
        <begin position="268"/>
        <end position="270"/>
    </location>
</feature>
<feature type="strand" evidence="13">
    <location>
        <begin position="283"/>
        <end position="291"/>
    </location>
</feature>
<feature type="helix" evidence="13">
    <location>
        <begin position="293"/>
        <end position="295"/>
    </location>
</feature>
<feature type="strand" evidence="13">
    <location>
        <begin position="296"/>
        <end position="299"/>
    </location>
</feature>
<feature type="helix" evidence="13">
    <location>
        <begin position="302"/>
        <end position="305"/>
    </location>
</feature>
<feature type="strand" evidence="13">
    <location>
        <begin position="309"/>
        <end position="317"/>
    </location>
</feature>
<feature type="strand" evidence="13">
    <location>
        <begin position="320"/>
        <end position="329"/>
    </location>
</feature>
<feature type="strand" evidence="13">
    <location>
        <begin position="331"/>
        <end position="340"/>
    </location>
</feature>
<feature type="helix" evidence="13">
    <location>
        <begin position="341"/>
        <end position="359"/>
    </location>
</feature>
<dbReference type="EC" id="6.3.2.59" evidence="5"/>
<dbReference type="EMBL" id="CP000099">
    <property type="protein sequence ID" value="AAZ69813.1"/>
    <property type="molecule type" value="Genomic_DNA"/>
</dbReference>
<dbReference type="PDB" id="4FFL">
    <property type="method" value="X-ray"/>
    <property type="resolution" value="1.50 A"/>
    <property type="chains" value="A=1-363"/>
</dbReference>
<dbReference type="PDB" id="4FFM">
    <property type="method" value="X-ray"/>
    <property type="resolution" value="1.91 A"/>
    <property type="chains" value="A=1-363"/>
</dbReference>
<dbReference type="PDB" id="4FFN">
    <property type="method" value="X-ray"/>
    <property type="resolution" value="2.40 A"/>
    <property type="chains" value="A=1-363"/>
</dbReference>
<dbReference type="PDB" id="4FFO">
    <property type="method" value="X-ray"/>
    <property type="resolution" value="2.00 A"/>
    <property type="chains" value="A=1-363"/>
</dbReference>
<dbReference type="PDB" id="4FFP">
    <property type="method" value="X-ray"/>
    <property type="resolution" value="2.00 A"/>
    <property type="chains" value="A=1-363"/>
</dbReference>
<dbReference type="PDB" id="4FFR">
    <property type="method" value="X-ray"/>
    <property type="resolution" value="1.80 A"/>
    <property type="chains" value="A=1-363"/>
</dbReference>
<dbReference type="PDBsum" id="4FFL"/>
<dbReference type="PDBsum" id="4FFM"/>
<dbReference type="PDBsum" id="4FFN"/>
<dbReference type="PDBsum" id="4FFO"/>
<dbReference type="PDBsum" id="4FFP"/>
<dbReference type="PDBsum" id="4FFR"/>
<dbReference type="SMR" id="Q46E79"/>
<dbReference type="STRING" id="269797.Mbar_A0837"/>
<dbReference type="PaxDb" id="269797-Mbar_A0837"/>
<dbReference type="KEGG" id="mba:Mbar_A0837"/>
<dbReference type="eggNOG" id="arCOG01596">
    <property type="taxonomic scope" value="Archaea"/>
</dbReference>
<dbReference type="HOGENOM" id="CLU_707177_0_0_2"/>
<dbReference type="OrthoDB" id="120341at2157"/>
<dbReference type="BRENDA" id="6.3.2.59">
    <property type="organism ID" value="3250"/>
</dbReference>
<dbReference type="UniPathway" id="UPA01028"/>
<dbReference type="EvolutionaryTrace" id="Q46E79"/>
<dbReference type="GO" id="GO:0005829">
    <property type="term" value="C:cytosol"/>
    <property type="evidence" value="ECO:0007669"/>
    <property type="project" value="TreeGrafter"/>
</dbReference>
<dbReference type="GO" id="GO:0005524">
    <property type="term" value="F:ATP binding"/>
    <property type="evidence" value="ECO:0007669"/>
    <property type="project" value="UniProtKB-KW"/>
</dbReference>
<dbReference type="GO" id="GO:0016874">
    <property type="term" value="F:ligase activity"/>
    <property type="evidence" value="ECO:0007669"/>
    <property type="project" value="UniProtKB-KW"/>
</dbReference>
<dbReference type="GO" id="GO:0046872">
    <property type="term" value="F:metal ion binding"/>
    <property type="evidence" value="ECO:0007669"/>
    <property type="project" value="UniProtKB-KW"/>
</dbReference>
<dbReference type="GO" id="GO:0071524">
    <property type="term" value="P:pyrrolysine biosynthetic process"/>
    <property type="evidence" value="ECO:0007669"/>
    <property type="project" value="UniProtKB-UniPathway"/>
</dbReference>
<dbReference type="Gene3D" id="3.30.470.20">
    <property type="entry name" value="ATP-grasp fold, B domain"/>
    <property type="match status" value="1"/>
</dbReference>
<dbReference type="Gene3D" id="3.40.50.720">
    <property type="entry name" value="NAD(P)-binding Rossmann-like Domain"/>
    <property type="match status" value="1"/>
</dbReference>
<dbReference type="InterPro" id="IPR011761">
    <property type="entry name" value="ATP-grasp"/>
</dbReference>
<dbReference type="InterPro" id="IPR003806">
    <property type="entry name" value="ATP-grasp_PylC-type"/>
</dbReference>
<dbReference type="InterPro" id="IPR048764">
    <property type="entry name" value="PylC_N"/>
</dbReference>
<dbReference type="InterPro" id="IPR023890">
    <property type="entry name" value="Pyrrolys_PylC"/>
</dbReference>
<dbReference type="NCBIfam" id="TIGR03909">
    <property type="entry name" value="pyrrolys_PylC"/>
    <property type="match status" value="1"/>
</dbReference>
<dbReference type="PANTHER" id="PTHR43055">
    <property type="entry name" value="FORMATE-DEPENDENT PHOSPHORIBOSYLGLYCINAMIDE FORMYLTRANSFERASE"/>
    <property type="match status" value="1"/>
</dbReference>
<dbReference type="PANTHER" id="PTHR43055:SF1">
    <property type="entry name" value="FORMATE-DEPENDENT PHOSPHORIBOSYLGLYCINAMIDE FORMYLTRANSFERASE"/>
    <property type="match status" value="1"/>
</dbReference>
<dbReference type="Pfam" id="PF02655">
    <property type="entry name" value="ATP-grasp_3"/>
    <property type="match status" value="1"/>
</dbReference>
<dbReference type="Pfam" id="PF21360">
    <property type="entry name" value="PylC-like_N"/>
    <property type="match status" value="1"/>
</dbReference>
<dbReference type="SUPFAM" id="SSF56059">
    <property type="entry name" value="Glutathione synthetase ATP-binding domain-like"/>
    <property type="match status" value="1"/>
</dbReference>
<dbReference type="PROSITE" id="PS50975">
    <property type="entry name" value="ATP_GRASP"/>
    <property type="match status" value="1"/>
</dbReference>
<keyword id="KW-0002">3D-structure</keyword>
<keyword id="KW-0028">Amino-acid biosynthesis</keyword>
<keyword id="KW-0067">ATP-binding</keyword>
<keyword id="KW-0436">Ligase</keyword>
<keyword id="KW-0460">Magnesium</keyword>
<keyword id="KW-0479">Metal-binding</keyword>
<keyword id="KW-0547">Nucleotide-binding</keyword>
<organism>
    <name type="scientific">Methanosarcina barkeri (strain Fusaro / DSM 804)</name>
    <dbReference type="NCBI Taxonomy" id="269797"/>
    <lineage>
        <taxon>Archaea</taxon>
        <taxon>Methanobacteriati</taxon>
        <taxon>Methanobacteriota</taxon>
        <taxon>Stenosarchaea group</taxon>
        <taxon>Methanomicrobia</taxon>
        <taxon>Methanosarcinales</taxon>
        <taxon>Methanosarcinaceae</taxon>
        <taxon>Methanosarcina</taxon>
    </lineage>
</organism>
<accession>Q46E79</accession>
<name>PYLC_METBF</name>
<reference key="1">
    <citation type="journal article" date="2006" name="J. Bacteriol.">
        <title>The Methanosarcina barkeri genome: comparative analysis with Methanosarcina acetivorans and Methanosarcina mazei reveals extensive rearrangement within methanosarcinal genomes.</title>
        <authorList>
            <person name="Maeder D.L."/>
            <person name="Anderson I."/>
            <person name="Brettin T.S."/>
            <person name="Bruce D.C."/>
            <person name="Gilna P."/>
            <person name="Han C.S."/>
            <person name="Lapidus A."/>
            <person name="Metcalf W.W."/>
            <person name="Saunders E."/>
            <person name="Tapia R."/>
            <person name="Sowers K.R."/>
        </authorList>
    </citation>
    <scope>NUCLEOTIDE SEQUENCE [LARGE SCALE GENOMIC DNA]</scope>
    <source>
        <strain>Fusaro / DSM 804</strain>
    </source>
</reference>
<reference evidence="7 8 9 10 11 12" key="2">
    <citation type="journal article" date="2012" name="J. Mol. Biol.">
        <title>Biosynthesis of the 22nd genetically encoded amino acid pyrrolysine: structure and reaction mechanism of PylC at 1.5A resolution.</title>
        <authorList>
            <person name="Quitterer F."/>
            <person name="List A."/>
            <person name="Beck P."/>
            <person name="Bacher A."/>
            <person name="Groll M."/>
        </authorList>
    </citation>
    <scope>X-RAY CRYSTALLOGRAPHY (1.50 ANGSTROMS) IN COMPLEX WITH ADP; ATP; D-ORNITHINE; L-LYSINE; L-LYSINE-N(EPSILON)-D-ORNITHINE AND MAGNESIUM</scope>
    <scope>REACTION MECHANISM</scope>
    <scope>COFACTOR</scope>
    <scope>DOMAIN</scope>
    <source>
        <strain>Fusaro / DSM 804</strain>
    </source>
</reference>
<gene>
    <name evidence="3" type="primary">pylC</name>
    <name evidence="6" type="ordered locus">Mbar_A0837</name>
</gene>
<protein>
    <recommendedName>
        <fullName evidence="4">3-methyl-D-ornithine--L-lysine ligase</fullName>
        <ecNumber evidence="5">6.3.2.59</ecNumber>
    </recommendedName>
    <alternativeName>
        <fullName evidence="4">(3R)-3-methyl-D-ornithine:L-lysine ligase</fullName>
    </alternativeName>
    <alternativeName>
        <fullName evidence="4">Pyrrolysine biosynthesis protein PylC</fullName>
    </alternativeName>
</protein>
<comment type="function">
    <text evidence="1 5">Is required for the biosynthesis of pyrrolysine (By similarity). Catalyzes the ATP-dependent ligation between (3R)-3-methyl-D-ornithine and L-lysine, leading to (3R)-3-methyl-D-ornithyl-N6-L-lysine (Probable).</text>
</comment>
<comment type="catalytic activity">
    <reaction evidence="5">
        <text>(3R)-3-methyl-D-ornithine + L-lysine + ATP = (3R)-3-methyl-D-ornithyl-N(6)-L-lysine + ADP + phosphate + H(+)</text>
        <dbReference type="Rhea" id="RHEA:32763"/>
        <dbReference type="ChEBI" id="CHEBI:15378"/>
        <dbReference type="ChEBI" id="CHEBI:30616"/>
        <dbReference type="ChEBI" id="CHEBI:32551"/>
        <dbReference type="ChEBI" id="CHEBI:43474"/>
        <dbReference type="ChEBI" id="CHEBI:64642"/>
        <dbReference type="ChEBI" id="CHEBI:64643"/>
        <dbReference type="ChEBI" id="CHEBI:456216"/>
        <dbReference type="EC" id="6.3.2.59"/>
    </reaction>
    <physiologicalReaction direction="left-to-right" evidence="5">
        <dbReference type="Rhea" id="RHEA:32764"/>
    </physiologicalReaction>
</comment>
<comment type="cofactor">
    <cofactor evidence="2">
        <name>Mg(2+)</name>
        <dbReference type="ChEBI" id="CHEBI:18420"/>
    </cofactor>
    <text evidence="2">Binds 2 magnesium ions per subunit.</text>
</comment>
<comment type="pathway">
    <text evidence="1">Amino-acid biosynthesis; L-pyrrolysine biosynthesis.</text>
</comment>
<comment type="domain">
    <text evidence="2">Contains two adenine nucleotides bound at the active site. One ATP molecule is involved in catalysis, the second adenine nucleotide functions as a selective anchor for the C- and N-terminus of the Lys substrate and is responsible for protein stability.</text>
</comment>
<comment type="similarity">
    <text evidence="4">Belongs to the PylC family.</text>
</comment>
<sequence length="363" mass="40816">MKTICLVGGKLQGFEAAYLSKKAGMKVVLVDKNPQALIRNYADEFYCFDVIKEPEKLLELSKRVDAVLPVNENLACIEFLNSIKEKFSCPVLFDFEAYRISRDKKKSKDYFKSIGVPTPQDRPSKPPYFVKPPCESSSVGARIIYDDKDLEGLEPDTLVEEYVEGEVVSLEVVGDGSHFAVVKETLVHIDETYDCHMVTPLPANPLFRQISHDLAANLPLKGIMDVEAIFGPKGLRVIEIDARFPSQTPTVVYYSSGINLIELLFRAFTDGVEEIRAIPENKYCIYEHLMFGENGVLIPVGEQVLSMGSDYGKFYEEPGIEIFLCKGEYPVFTMVFWGKDREETGAKRCKGLSVLKERFGAVL</sequence>